<accession>Q29HG0</accession>
<comment type="function">
    <text evidence="1">Displays phosphatase activity for serine/threonine residues, and dephosphorylates and activates Pk92B kinase. Has apparently no phosphoglycerate mutase activity (By similarity).</text>
</comment>
<comment type="catalytic activity">
    <reaction>
        <text>O-phospho-L-seryl-[protein] + H2O = L-seryl-[protein] + phosphate</text>
        <dbReference type="Rhea" id="RHEA:20629"/>
        <dbReference type="Rhea" id="RHEA-COMP:9863"/>
        <dbReference type="Rhea" id="RHEA-COMP:11604"/>
        <dbReference type="ChEBI" id="CHEBI:15377"/>
        <dbReference type="ChEBI" id="CHEBI:29999"/>
        <dbReference type="ChEBI" id="CHEBI:43474"/>
        <dbReference type="ChEBI" id="CHEBI:83421"/>
        <dbReference type="EC" id="3.1.3.16"/>
    </reaction>
</comment>
<comment type="catalytic activity">
    <reaction>
        <text>O-phospho-L-threonyl-[protein] + H2O = L-threonyl-[protein] + phosphate</text>
        <dbReference type="Rhea" id="RHEA:47004"/>
        <dbReference type="Rhea" id="RHEA-COMP:11060"/>
        <dbReference type="Rhea" id="RHEA-COMP:11605"/>
        <dbReference type="ChEBI" id="CHEBI:15377"/>
        <dbReference type="ChEBI" id="CHEBI:30013"/>
        <dbReference type="ChEBI" id="CHEBI:43474"/>
        <dbReference type="ChEBI" id="CHEBI:61977"/>
        <dbReference type="EC" id="3.1.3.16"/>
    </reaction>
</comment>
<comment type="subunit">
    <text evidence="1">Interacts with Pk92B/ASK1.</text>
</comment>
<comment type="subcellular location">
    <subcellularLocation>
        <location evidence="1">Mitochondrion outer membrane</location>
        <topology evidence="1">Single-pass membrane protein</topology>
    </subcellularLocation>
</comment>
<comment type="similarity">
    <text evidence="3">Belongs to the phosphoglycerate mutase family. BPG-dependent PGAM subfamily.</text>
</comment>
<feature type="chain" id="PRO_0000288790" description="Serine/threonine-protein phosphatase Pgam5, mitochondrial">
    <location>
        <begin position="1"/>
        <end position="289"/>
    </location>
</feature>
<feature type="transmembrane region" description="Helical" evidence="2">
    <location>
        <begin position="7"/>
        <end position="23"/>
    </location>
</feature>
<evidence type="ECO:0000250" key="1"/>
<evidence type="ECO:0000255" key="2"/>
<evidence type="ECO:0000305" key="3"/>
<keyword id="KW-0378">Hydrolase</keyword>
<keyword id="KW-0472">Membrane</keyword>
<keyword id="KW-0496">Mitochondrion</keyword>
<keyword id="KW-1000">Mitochondrion outer membrane</keyword>
<keyword id="KW-1185">Reference proteome</keyword>
<keyword id="KW-0812">Transmembrane</keyword>
<keyword id="KW-1133">Transmembrane helix</keyword>
<reference key="1">
    <citation type="journal article" date="2005" name="Genome Res.">
        <title>Comparative genome sequencing of Drosophila pseudoobscura: chromosomal, gene, and cis-element evolution.</title>
        <authorList>
            <person name="Richards S."/>
            <person name="Liu Y."/>
            <person name="Bettencourt B.R."/>
            <person name="Hradecky P."/>
            <person name="Letovsky S."/>
            <person name="Nielsen R."/>
            <person name="Thornton K."/>
            <person name="Hubisz M.J."/>
            <person name="Chen R."/>
            <person name="Meisel R.P."/>
            <person name="Couronne O."/>
            <person name="Hua S."/>
            <person name="Smith M.A."/>
            <person name="Zhang P."/>
            <person name="Liu J."/>
            <person name="Bussemaker H.J."/>
            <person name="van Batenburg M.F."/>
            <person name="Howells S.L."/>
            <person name="Scherer S.E."/>
            <person name="Sodergren E."/>
            <person name="Matthews B.B."/>
            <person name="Crosby M.A."/>
            <person name="Schroeder A.J."/>
            <person name="Ortiz-Barrientos D."/>
            <person name="Rives C.M."/>
            <person name="Metzker M.L."/>
            <person name="Muzny D.M."/>
            <person name="Scott G."/>
            <person name="Steffen D."/>
            <person name="Wheeler D.A."/>
            <person name="Worley K.C."/>
            <person name="Havlak P."/>
            <person name="Durbin K.J."/>
            <person name="Egan A."/>
            <person name="Gill R."/>
            <person name="Hume J."/>
            <person name="Morgan M.B."/>
            <person name="Miner G."/>
            <person name="Hamilton C."/>
            <person name="Huang Y."/>
            <person name="Waldron L."/>
            <person name="Verduzco D."/>
            <person name="Clerc-Blankenburg K.P."/>
            <person name="Dubchak I."/>
            <person name="Noor M.A.F."/>
            <person name="Anderson W."/>
            <person name="White K.P."/>
            <person name="Clark A.G."/>
            <person name="Schaeffer S.W."/>
            <person name="Gelbart W.M."/>
            <person name="Weinstock G.M."/>
            <person name="Gibbs R.A."/>
        </authorList>
    </citation>
    <scope>NUCLEOTIDE SEQUENCE [LARGE SCALE GENOMIC DNA]</scope>
    <source>
        <strain>MV2-25 / Tucson 14011-0121.94</strain>
    </source>
</reference>
<protein>
    <recommendedName>
        <fullName>Serine/threonine-protein phosphatase Pgam5, mitochondrial</fullName>
        <ecNumber>3.1.3.16</ecNumber>
    </recommendedName>
    <alternativeName>
        <fullName>Phosphoglycerate mutase family member 5 homolog</fullName>
    </alternativeName>
</protein>
<sequence>MRKFTAFACGTGAGLLTFYLTKLNEPKAAVHNSWTRSEKPVDPCALWDHNWDLRDPKSLVKPVKNDLSQEQNRYNSELEKVVPKHARHIILIRHGEYLDVGDTDETHHLTERGREQAKYTGKRLCELGIKWDKVIASTMVRAQETADIILNEIDYEKAKVKNCAFLREGAPIPPQPPVGHWKPEASQFFRDGARIEAAFRRYFYRAYPDQTKDSYTLLVGHGNVIRYFVCRALQFPPEAWLRISINHASITWLTISPSGNVSIKYLGDTGFMPVNHLTNRIPRAAKNVV</sequence>
<proteinExistence type="inferred from homology"/>
<gene>
    <name type="primary">Pgam5</name>
    <name type="ORF">GA13269</name>
</gene>
<name>PGAM5_DROPS</name>
<organism>
    <name type="scientific">Drosophila pseudoobscura pseudoobscura</name>
    <name type="common">Fruit fly</name>
    <dbReference type="NCBI Taxonomy" id="46245"/>
    <lineage>
        <taxon>Eukaryota</taxon>
        <taxon>Metazoa</taxon>
        <taxon>Ecdysozoa</taxon>
        <taxon>Arthropoda</taxon>
        <taxon>Hexapoda</taxon>
        <taxon>Insecta</taxon>
        <taxon>Pterygota</taxon>
        <taxon>Neoptera</taxon>
        <taxon>Endopterygota</taxon>
        <taxon>Diptera</taxon>
        <taxon>Brachycera</taxon>
        <taxon>Muscomorpha</taxon>
        <taxon>Ephydroidea</taxon>
        <taxon>Drosophilidae</taxon>
        <taxon>Drosophila</taxon>
        <taxon>Sophophora</taxon>
    </lineage>
</organism>
<dbReference type="EC" id="3.1.3.16"/>
<dbReference type="EMBL" id="CH379064">
    <property type="protein sequence ID" value="EAL31798.1"/>
    <property type="molecule type" value="Genomic_DNA"/>
</dbReference>
<dbReference type="RefSeq" id="XP_001354743.1">
    <property type="nucleotide sequence ID" value="XM_001354707.3"/>
</dbReference>
<dbReference type="SMR" id="Q29HG0"/>
<dbReference type="FunCoup" id="Q29HG0">
    <property type="interactions" value="1065"/>
</dbReference>
<dbReference type="STRING" id="46245.Q29HG0"/>
<dbReference type="EnsemblMetazoa" id="FBtr0284485">
    <property type="protein sequence ID" value="FBpp0282923"/>
    <property type="gene ID" value="FBgn0073306"/>
</dbReference>
<dbReference type="GeneID" id="4815173"/>
<dbReference type="KEGG" id="dpo:4815173"/>
<dbReference type="CTD" id="192111"/>
<dbReference type="eggNOG" id="KOG4609">
    <property type="taxonomic scope" value="Eukaryota"/>
</dbReference>
<dbReference type="HOGENOM" id="CLU_063130_0_1_1"/>
<dbReference type="InParanoid" id="Q29HG0"/>
<dbReference type="OMA" id="MPMEMIT"/>
<dbReference type="PhylomeDB" id="Q29HG0"/>
<dbReference type="Proteomes" id="UP000001819">
    <property type="component" value="Chromosome X"/>
</dbReference>
<dbReference type="Bgee" id="FBgn0073306">
    <property type="expression patterns" value="Expressed in female reproductive system and 3 other cell types or tissues"/>
</dbReference>
<dbReference type="ExpressionAtlas" id="Q29HG0">
    <property type="expression patterns" value="baseline"/>
</dbReference>
<dbReference type="GO" id="GO:0005741">
    <property type="term" value="C:mitochondrial outer membrane"/>
    <property type="evidence" value="ECO:0007669"/>
    <property type="project" value="UniProtKB-SubCell"/>
</dbReference>
<dbReference type="GO" id="GO:0004721">
    <property type="term" value="F:phosphoprotein phosphatase activity"/>
    <property type="evidence" value="ECO:0000250"/>
    <property type="project" value="UniProtKB"/>
</dbReference>
<dbReference type="GO" id="GO:0004722">
    <property type="term" value="F:protein serine/threonine phosphatase activity"/>
    <property type="evidence" value="ECO:0007669"/>
    <property type="project" value="UniProtKB-EC"/>
</dbReference>
<dbReference type="GO" id="GO:0090141">
    <property type="term" value="P:positive regulation of mitochondrial fission"/>
    <property type="evidence" value="ECO:0007669"/>
    <property type="project" value="TreeGrafter"/>
</dbReference>
<dbReference type="GO" id="GO:0006470">
    <property type="term" value="P:protein dephosphorylation"/>
    <property type="evidence" value="ECO:0000250"/>
    <property type="project" value="UniProtKB"/>
</dbReference>
<dbReference type="CDD" id="cd07067">
    <property type="entry name" value="HP_PGM_like"/>
    <property type="match status" value="1"/>
</dbReference>
<dbReference type="FunFam" id="3.40.50.1240:FF:000009">
    <property type="entry name" value="serine/threonine-protein phosphatase PGAM5, mitochondrial isoform X1"/>
    <property type="match status" value="1"/>
</dbReference>
<dbReference type="Gene3D" id="3.40.50.1240">
    <property type="entry name" value="Phosphoglycerate mutase-like"/>
    <property type="match status" value="1"/>
</dbReference>
<dbReference type="InterPro" id="IPR013078">
    <property type="entry name" value="His_Pase_superF_clade-1"/>
</dbReference>
<dbReference type="InterPro" id="IPR029033">
    <property type="entry name" value="His_PPase_superfam"/>
</dbReference>
<dbReference type="InterPro" id="IPR051021">
    <property type="entry name" value="Mito_Ser/Thr_phosphatase"/>
</dbReference>
<dbReference type="PANTHER" id="PTHR20935">
    <property type="entry name" value="PHOSPHOGLYCERATE MUTASE-RELATED"/>
    <property type="match status" value="1"/>
</dbReference>
<dbReference type="PANTHER" id="PTHR20935:SF0">
    <property type="entry name" value="SERINE_THREONINE-PROTEIN PHOSPHATASE PGAM5, MITOCHONDRIAL"/>
    <property type="match status" value="1"/>
</dbReference>
<dbReference type="Pfam" id="PF00300">
    <property type="entry name" value="His_Phos_1"/>
    <property type="match status" value="2"/>
</dbReference>
<dbReference type="SMART" id="SM00855">
    <property type="entry name" value="PGAM"/>
    <property type="match status" value="1"/>
</dbReference>
<dbReference type="SUPFAM" id="SSF53254">
    <property type="entry name" value="Phosphoglycerate mutase-like"/>
    <property type="match status" value="1"/>
</dbReference>